<proteinExistence type="inferred from homology"/>
<protein>
    <recommendedName>
        <fullName evidence="1">Ribosomal RNA small subunit methyltransferase H</fullName>
        <ecNumber evidence="1">2.1.1.199</ecNumber>
    </recommendedName>
    <alternativeName>
        <fullName evidence="1">16S rRNA m(4)C1402 methyltransferase</fullName>
    </alternativeName>
    <alternativeName>
        <fullName evidence="1">rRNA (cytosine-N(4)-)-methyltransferase RsmH</fullName>
    </alternativeName>
</protein>
<gene>
    <name evidence="1" type="primary">rsmH</name>
    <name type="synonym">mraW</name>
    <name type="ordered locus">PSPTO_4416</name>
</gene>
<comment type="function">
    <text evidence="1">Specifically methylates the N4 position of cytidine in position 1402 (C1402) of 16S rRNA.</text>
</comment>
<comment type="catalytic activity">
    <reaction evidence="1">
        <text>cytidine(1402) in 16S rRNA + S-adenosyl-L-methionine = N(4)-methylcytidine(1402) in 16S rRNA + S-adenosyl-L-homocysteine + H(+)</text>
        <dbReference type="Rhea" id="RHEA:42928"/>
        <dbReference type="Rhea" id="RHEA-COMP:10286"/>
        <dbReference type="Rhea" id="RHEA-COMP:10287"/>
        <dbReference type="ChEBI" id="CHEBI:15378"/>
        <dbReference type="ChEBI" id="CHEBI:57856"/>
        <dbReference type="ChEBI" id="CHEBI:59789"/>
        <dbReference type="ChEBI" id="CHEBI:74506"/>
        <dbReference type="ChEBI" id="CHEBI:82748"/>
        <dbReference type="EC" id="2.1.1.199"/>
    </reaction>
</comment>
<comment type="subcellular location">
    <subcellularLocation>
        <location evidence="1">Cytoplasm</location>
    </subcellularLocation>
</comment>
<comment type="similarity">
    <text evidence="1">Belongs to the methyltransferase superfamily. RsmH family.</text>
</comment>
<feature type="chain" id="PRO_0000108687" description="Ribosomal RNA small subunit methyltransferase H">
    <location>
        <begin position="1"/>
        <end position="313"/>
    </location>
</feature>
<feature type="binding site" evidence="1">
    <location>
        <begin position="35"/>
        <end position="37"/>
    </location>
    <ligand>
        <name>S-adenosyl-L-methionine</name>
        <dbReference type="ChEBI" id="CHEBI:59789"/>
    </ligand>
</feature>
<feature type="binding site" evidence="1">
    <location>
        <position position="55"/>
    </location>
    <ligand>
        <name>S-adenosyl-L-methionine</name>
        <dbReference type="ChEBI" id="CHEBI:59789"/>
    </ligand>
</feature>
<feature type="binding site" evidence="1">
    <location>
        <position position="81"/>
    </location>
    <ligand>
        <name>S-adenosyl-L-methionine</name>
        <dbReference type="ChEBI" id="CHEBI:59789"/>
    </ligand>
</feature>
<feature type="binding site" evidence="1">
    <location>
        <position position="103"/>
    </location>
    <ligand>
        <name>S-adenosyl-L-methionine</name>
        <dbReference type="ChEBI" id="CHEBI:59789"/>
    </ligand>
</feature>
<feature type="binding site" evidence="1">
    <location>
        <position position="110"/>
    </location>
    <ligand>
        <name>S-adenosyl-L-methionine</name>
        <dbReference type="ChEBI" id="CHEBI:59789"/>
    </ligand>
</feature>
<sequence>MNSGFTHITVLLEEAVEALAVRADGCYLDGTFGRGGHSRLILNHLGPDGRLLGFDKDPQAIATGQALAAEDGRFVIVQRSFAELGSQAQELGLAGKVSGILLDLGVSSPQLDDPERGFSFMNDGPLDMRMDPTRGVSAAEFIASAPAEEIARVFKEYGEERFAKRMANAVVQRREIQPFERTADLAEVLKVANPAWEKGKNPATRAFQGLRIHVNNELGDLEAGLEAAMESLEVGGRLVVISFHSLEDRIVKLFMRKLAKGEADNMPRNLPIQYKAFEPKIKIHGKAQFASDVETKANPRSRSAVMRVAEKLR</sequence>
<accession>Q87WX7</accession>
<reference key="1">
    <citation type="journal article" date="2003" name="Proc. Natl. Acad. Sci. U.S.A.">
        <title>The complete genome sequence of the Arabidopsis and tomato pathogen Pseudomonas syringae pv. tomato DC3000.</title>
        <authorList>
            <person name="Buell C.R."/>
            <person name="Joardar V."/>
            <person name="Lindeberg M."/>
            <person name="Selengut J."/>
            <person name="Paulsen I.T."/>
            <person name="Gwinn M.L."/>
            <person name="Dodson R.J."/>
            <person name="DeBoy R.T."/>
            <person name="Durkin A.S."/>
            <person name="Kolonay J.F."/>
            <person name="Madupu R."/>
            <person name="Daugherty S.C."/>
            <person name="Brinkac L.M."/>
            <person name="Beanan M.J."/>
            <person name="Haft D.H."/>
            <person name="Nelson W.C."/>
            <person name="Davidsen T.M."/>
            <person name="Zafar N."/>
            <person name="Zhou L."/>
            <person name="Liu J."/>
            <person name="Yuan Q."/>
            <person name="Khouri H.M."/>
            <person name="Fedorova N.B."/>
            <person name="Tran B."/>
            <person name="Russell D."/>
            <person name="Berry K.J."/>
            <person name="Utterback T.R."/>
            <person name="Van Aken S.E."/>
            <person name="Feldblyum T.V."/>
            <person name="D'Ascenzo M."/>
            <person name="Deng W.-L."/>
            <person name="Ramos A.R."/>
            <person name="Alfano J.R."/>
            <person name="Cartinhour S."/>
            <person name="Chatterjee A.K."/>
            <person name="Delaney T.P."/>
            <person name="Lazarowitz S.G."/>
            <person name="Martin G.B."/>
            <person name="Schneider D.J."/>
            <person name="Tang X."/>
            <person name="Bender C.L."/>
            <person name="White O."/>
            <person name="Fraser C.M."/>
            <person name="Collmer A."/>
        </authorList>
    </citation>
    <scope>NUCLEOTIDE SEQUENCE [LARGE SCALE GENOMIC DNA]</scope>
    <source>
        <strain>ATCC BAA-871 / DC3000</strain>
    </source>
</reference>
<dbReference type="EC" id="2.1.1.199" evidence="1"/>
<dbReference type="EMBL" id="AE016853">
    <property type="protein sequence ID" value="AAO57865.1"/>
    <property type="molecule type" value="Genomic_DNA"/>
</dbReference>
<dbReference type="RefSeq" id="NP_794170.1">
    <property type="nucleotide sequence ID" value="NC_004578.1"/>
</dbReference>
<dbReference type="RefSeq" id="WP_007243678.1">
    <property type="nucleotide sequence ID" value="NC_004578.1"/>
</dbReference>
<dbReference type="SMR" id="Q87WX7"/>
<dbReference type="STRING" id="223283.PSPTO_4416"/>
<dbReference type="GeneID" id="1186097"/>
<dbReference type="KEGG" id="pst:PSPTO_4416"/>
<dbReference type="PATRIC" id="fig|223283.9.peg.4531"/>
<dbReference type="eggNOG" id="COG0275">
    <property type="taxonomic scope" value="Bacteria"/>
</dbReference>
<dbReference type="HOGENOM" id="CLU_038422_2_0_6"/>
<dbReference type="OrthoDB" id="9806637at2"/>
<dbReference type="PhylomeDB" id="Q87WX7"/>
<dbReference type="Proteomes" id="UP000002515">
    <property type="component" value="Chromosome"/>
</dbReference>
<dbReference type="GO" id="GO:0005737">
    <property type="term" value="C:cytoplasm"/>
    <property type="evidence" value="ECO:0007669"/>
    <property type="project" value="UniProtKB-SubCell"/>
</dbReference>
<dbReference type="GO" id="GO:0071424">
    <property type="term" value="F:rRNA (cytosine-N4-)-methyltransferase activity"/>
    <property type="evidence" value="ECO:0007669"/>
    <property type="project" value="UniProtKB-UniRule"/>
</dbReference>
<dbReference type="GO" id="GO:0070475">
    <property type="term" value="P:rRNA base methylation"/>
    <property type="evidence" value="ECO:0007669"/>
    <property type="project" value="UniProtKB-UniRule"/>
</dbReference>
<dbReference type="FunFam" id="1.10.150.170:FF:000001">
    <property type="entry name" value="Ribosomal RNA small subunit methyltransferase H"/>
    <property type="match status" value="1"/>
</dbReference>
<dbReference type="Gene3D" id="1.10.150.170">
    <property type="entry name" value="Putative methyltransferase TM0872, insert domain"/>
    <property type="match status" value="1"/>
</dbReference>
<dbReference type="Gene3D" id="3.40.50.150">
    <property type="entry name" value="Vaccinia Virus protein VP39"/>
    <property type="match status" value="1"/>
</dbReference>
<dbReference type="HAMAP" id="MF_01007">
    <property type="entry name" value="16SrRNA_methyltr_H"/>
    <property type="match status" value="1"/>
</dbReference>
<dbReference type="InterPro" id="IPR002903">
    <property type="entry name" value="RsmH"/>
</dbReference>
<dbReference type="InterPro" id="IPR023397">
    <property type="entry name" value="SAM-dep_MeTrfase_MraW_recog"/>
</dbReference>
<dbReference type="InterPro" id="IPR029063">
    <property type="entry name" value="SAM-dependent_MTases_sf"/>
</dbReference>
<dbReference type="NCBIfam" id="TIGR00006">
    <property type="entry name" value="16S rRNA (cytosine(1402)-N(4))-methyltransferase RsmH"/>
    <property type="match status" value="1"/>
</dbReference>
<dbReference type="PANTHER" id="PTHR11265:SF0">
    <property type="entry name" value="12S RRNA N4-METHYLCYTIDINE METHYLTRANSFERASE"/>
    <property type="match status" value="1"/>
</dbReference>
<dbReference type="PANTHER" id="PTHR11265">
    <property type="entry name" value="S-ADENOSYL-METHYLTRANSFERASE MRAW"/>
    <property type="match status" value="1"/>
</dbReference>
<dbReference type="Pfam" id="PF01795">
    <property type="entry name" value="Methyltransf_5"/>
    <property type="match status" value="1"/>
</dbReference>
<dbReference type="PIRSF" id="PIRSF004486">
    <property type="entry name" value="MraW"/>
    <property type="match status" value="1"/>
</dbReference>
<dbReference type="SUPFAM" id="SSF81799">
    <property type="entry name" value="Putative methyltransferase TM0872, insert domain"/>
    <property type="match status" value="1"/>
</dbReference>
<dbReference type="SUPFAM" id="SSF53335">
    <property type="entry name" value="S-adenosyl-L-methionine-dependent methyltransferases"/>
    <property type="match status" value="1"/>
</dbReference>
<keyword id="KW-0963">Cytoplasm</keyword>
<keyword id="KW-0489">Methyltransferase</keyword>
<keyword id="KW-1185">Reference proteome</keyword>
<keyword id="KW-0698">rRNA processing</keyword>
<keyword id="KW-0949">S-adenosyl-L-methionine</keyword>
<keyword id="KW-0808">Transferase</keyword>
<name>RSMH_PSESM</name>
<organism>
    <name type="scientific">Pseudomonas syringae pv. tomato (strain ATCC BAA-871 / DC3000)</name>
    <dbReference type="NCBI Taxonomy" id="223283"/>
    <lineage>
        <taxon>Bacteria</taxon>
        <taxon>Pseudomonadati</taxon>
        <taxon>Pseudomonadota</taxon>
        <taxon>Gammaproteobacteria</taxon>
        <taxon>Pseudomonadales</taxon>
        <taxon>Pseudomonadaceae</taxon>
        <taxon>Pseudomonas</taxon>
    </lineage>
</organism>
<evidence type="ECO:0000255" key="1">
    <source>
        <dbReference type="HAMAP-Rule" id="MF_01007"/>
    </source>
</evidence>